<protein>
    <recommendedName>
        <fullName evidence="4">Kinetochore protein NDC80 homolog</fullName>
    </recommendedName>
</protein>
<name>NDC80_ARATH</name>
<keyword id="KW-0131">Cell cycle</keyword>
<keyword id="KW-0132">Cell division</keyword>
<keyword id="KW-0137">Centromere</keyword>
<keyword id="KW-0158">Chromosome</keyword>
<keyword id="KW-0175">Coiled coil</keyword>
<keyword id="KW-0498">Mitosis</keyword>
<keyword id="KW-1185">Reference proteome</keyword>
<sequence length="568" mass="63332">MRGGAAGKRRTTVGFGGAPPPPPPSIEQQRHLFNSRDSDASFASSRPSSIGLGGRGASDDRSSMIRFINAFLSTHNFPISIRGNPVPSVKDISETLKFLLSALDYPCDSIKWDEDLVFFLKSQKCPFKITKSSLKAPNTPHNWPTVLAVVHWLAELARFHQHLVSNSTSVPEDNSMNFFAIQSFGHFIRGEDDKVNDLDSQFLGKLEAEKTSVAETISGCEKISGELEAKLESLRKGPSKKESLEKVKADLENDVNKFRTIVVEYTDRNPAMEKVVEEKAKELKAKEEERERISVENKELKKSVELQNFSAADVNRMRRELQAVERDVADAEVARDGWDQKAWELNSQIRNQFHQIQTLAIDCNQALRRLKLDIQFAVNERGETPAAVMGVDYKSVVKPALCSLCDGIKGSSAEKVEELVTLQHHKSEMASKIESKRSLLGSIQLQINDLEEKMKLVKKETQELSTKCDLEAKTLVESVKAEALNLEVVEKEAAEFVKASELRLQEAVKESEEEVQACAAQLFALIDSISKQKEYMDSKISEIKTGVADTASAVSEIYKANFKKNLGI</sequence>
<evidence type="ECO:0000255" key="1"/>
<evidence type="ECO:0000256" key="2">
    <source>
        <dbReference type="SAM" id="MobiDB-lite"/>
    </source>
</evidence>
<evidence type="ECO:0000269" key="3">
    <source>
    </source>
</evidence>
<evidence type="ECO:0000303" key="4">
    <source>
    </source>
</evidence>
<evidence type="ECO:0000305" key="5"/>
<evidence type="ECO:0000305" key="6">
    <source>
    </source>
</evidence>
<evidence type="ECO:0000312" key="7">
    <source>
        <dbReference type="Araport" id="AT3G54630"/>
    </source>
</evidence>
<evidence type="ECO:0000312" key="8">
    <source>
        <dbReference type="EMBL" id="CAB77583.1"/>
    </source>
</evidence>
<reference key="1">
    <citation type="journal article" date="2000" name="Nature">
        <title>Sequence and analysis of chromosome 3 of the plant Arabidopsis thaliana.</title>
        <authorList>
            <person name="Salanoubat M."/>
            <person name="Lemcke K."/>
            <person name="Rieger M."/>
            <person name="Ansorge W."/>
            <person name="Unseld M."/>
            <person name="Fartmann B."/>
            <person name="Valle G."/>
            <person name="Bloecker H."/>
            <person name="Perez-Alonso M."/>
            <person name="Obermaier B."/>
            <person name="Delseny M."/>
            <person name="Boutry M."/>
            <person name="Grivell L.A."/>
            <person name="Mache R."/>
            <person name="Puigdomenech P."/>
            <person name="De Simone V."/>
            <person name="Choisne N."/>
            <person name="Artiguenave F."/>
            <person name="Robert C."/>
            <person name="Brottier P."/>
            <person name="Wincker P."/>
            <person name="Cattolico L."/>
            <person name="Weissenbach J."/>
            <person name="Saurin W."/>
            <person name="Quetier F."/>
            <person name="Schaefer M."/>
            <person name="Mueller-Auer S."/>
            <person name="Gabel C."/>
            <person name="Fuchs M."/>
            <person name="Benes V."/>
            <person name="Wurmbach E."/>
            <person name="Drzonek H."/>
            <person name="Erfle H."/>
            <person name="Jordan N."/>
            <person name="Bangert S."/>
            <person name="Wiedelmann R."/>
            <person name="Kranz H."/>
            <person name="Voss H."/>
            <person name="Holland R."/>
            <person name="Brandt P."/>
            <person name="Nyakatura G."/>
            <person name="Vezzi A."/>
            <person name="D'Angelo M."/>
            <person name="Pallavicini A."/>
            <person name="Toppo S."/>
            <person name="Simionati B."/>
            <person name="Conrad A."/>
            <person name="Hornischer K."/>
            <person name="Kauer G."/>
            <person name="Loehnert T.-H."/>
            <person name="Nordsiek G."/>
            <person name="Reichelt J."/>
            <person name="Scharfe M."/>
            <person name="Schoen O."/>
            <person name="Bargues M."/>
            <person name="Terol J."/>
            <person name="Climent J."/>
            <person name="Navarro P."/>
            <person name="Collado C."/>
            <person name="Perez-Perez A."/>
            <person name="Ottenwaelder B."/>
            <person name="Duchemin D."/>
            <person name="Cooke R."/>
            <person name="Laudie M."/>
            <person name="Berger-Llauro C."/>
            <person name="Purnelle B."/>
            <person name="Masuy D."/>
            <person name="de Haan M."/>
            <person name="Maarse A.C."/>
            <person name="Alcaraz J.-P."/>
            <person name="Cottet A."/>
            <person name="Casacuberta E."/>
            <person name="Monfort A."/>
            <person name="Argiriou A."/>
            <person name="Flores M."/>
            <person name="Liguori R."/>
            <person name="Vitale D."/>
            <person name="Mannhaupt G."/>
            <person name="Haase D."/>
            <person name="Schoof H."/>
            <person name="Rudd S."/>
            <person name="Zaccaria P."/>
            <person name="Mewes H.-W."/>
            <person name="Mayer K.F.X."/>
            <person name="Kaul S."/>
            <person name="Town C.D."/>
            <person name="Koo H.L."/>
            <person name="Tallon L.J."/>
            <person name="Jenkins J."/>
            <person name="Rooney T."/>
            <person name="Rizzo M."/>
            <person name="Walts A."/>
            <person name="Utterback T."/>
            <person name="Fujii C.Y."/>
            <person name="Shea T.P."/>
            <person name="Creasy T.H."/>
            <person name="Haas B."/>
            <person name="Maiti R."/>
            <person name="Wu D."/>
            <person name="Peterson J."/>
            <person name="Van Aken S."/>
            <person name="Pai G."/>
            <person name="Militscher J."/>
            <person name="Sellers P."/>
            <person name="Gill J.E."/>
            <person name="Feldblyum T.V."/>
            <person name="Preuss D."/>
            <person name="Lin X."/>
            <person name="Nierman W.C."/>
            <person name="Salzberg S.L."/>
            <person name="White O."/>
            <person name="Venter J.C."/>
            <person name="Fraser C.M."/>
            <person name="Kaneko T."/>
            <person name="Nakamura Y."/>
            <person name="Sato S."/>
            <person name="Kato T."/>
            <person name="Asamizu E."/>
            <person name="Sasamoto S."/>
            <person name="Kimura T."/>
            <person name="Idesawa K."/>
            <person name="Kawashima K."/>
            <person name="Kishida Y."/>
            <person name="Kiyokawa C."/>
            <person name="Kohara M."/>
            <person name="Matsumoto M."/>
            <person name="Matsuno A."/>
            <person name="Muraki A."/>
            <person name="Nakayama S."/>
            <person name="Nakazaki N."/>
            <person name="Shinpo S."/>
            <person name="Takeuchi C."/>
            <person name="Wada T."/>
            <person name="Watanabe A."/>
            <person name="Yamada M."/>
            <person name="Yasuda M."/>
            <person name="Tabata S."/>
        </authorList>
    </citation>
    <scope>NUCLEOTIDE SEQUENCE [LARGE SCALE GENOMIC DNA]</scope>
    <source>
        <strain>cv. Columbia</strain>
    </source>
</reference>
<reference key="2">
    <citation type="journal article" date="2017" name="Plant J.">
        <title>Araport11: a complete reannotation of the Arabidopsis thaliana reference genome.</title>
        <authorList>
            <person name="Cheng C.Y."/>
            <person name="Krishnakumar V."/>
            <person name="Chan A.P."/>
            <person name="Thibaud-Nissen F."/>
            <person name="Schobel S."/>
            <person name="Town C.D."/>
        </authorList>
    </citation>
    <scope>GENOME REANNOTATION</scope>
    <source>
        <strain>cv. Columbia</strain>
    </source>
</reference>
<reference key="3">
    <citation type="submission" date="2007-03" db="EMBL/GenBank/DDBJ databases">
        <title>Arabidopsis ORF clones.</title>
        <authorList>
            <person name="Bautista V.R."/>
            <person name="Kim C.J."/>
            <person name="Chen H."/>
            <person name="Wu S.Y."/>
            <person name="De Los Reyes C."/>
            <person name="Ecker J.R."/>
        </authorList>
    </citation>
    <scope>NUCLEOTIDE SEQUENCE [LARGE SCALE MRNA]</scope>
    <source>
        <strain>cv. Columbia</strain>
    </source>
</reference>
<reference key="4">
    <citation type="journal article" date="2018" name="Plant J.">
        <title>MUN (MERISTEM UNSTRUCTURED), encoding a SPC24 homolog of NDC80 kinetochore complex, affects development through cell division in Arabidopsis thaliana.</title>
        <authorList>
            <person name="Shin J."/>
            <person name="Jeong G."/>
            <person name="Park J.Y."/>
            <person name="Kim H."/>
            <person name="Lee I."/>
        </authorList>
    </citation>
    <scope>FUNCTION</scope>
    <scope>SUBUNIT</scope>
    <scope>SUBCELLULAR LOCATION</scope>
</reference>
<accession>Q9M1G5</accession>
<accession>A4FVQ9</accession>
<organism>
    <name type="scientific">Arabidopsis thaliana</name>
    <name type="common">Mouse-ear cress</name>
    <dbReference type="NCBI Taxonomy" id="3702"/>
    <lineage>
        <taxon>Eukaryota</taxon>
        <taxon>Viridiplantae</taxon>
        <taxon>Streptophyta</taxon>
        <taxon>Embryophyta</taxon>
        <taxon>Tracheophyta</taxon>
        <taxon>Spermatophyta</taxon>
        <taxon>Magnoliopsida</taxon>
        <taxon>eudicotyledons</taxon>
        <taxon>Gunneridae</taxon>
        <taxon>Pentapetalae</taxon>
        <taxon>rosids</taxon>
        <taxon>malvids</taxon>
        <taxon>Brassicales</taxon>
        <taxon>Brassicaceae</taxon>
        <taxon>Camelineae</taxon>
        <taxon>Arabidopsis</taxon>
    </lineage>
</organism>
<proteinExistence type="evidence at protein level"/>
<feature type="chain" id="PRO_0000444102" description="Kinetochore protein NDC80 homolog">
    <location>
        <begin position="1"/>
        <end position="568"/>
    </location>
</feature>
<feature type="region of interest" description="Disordered" evidence="2">
    <location>
        <begin position="1"/>
        <end position="59"/>
    </location>
</feature>
<feature type="coiled-coil region" evidence="1">
    <location>
        <begin position="241"/>
        <end position="334"/>
    </location>
</feature>
<feature type="coiled-coil region" evidence="1">
    <location>
        <begin position="433"/>
        <end position="469"/>
    </location>
</feature>
<feature type="compositionally biased region" description="Basic and acidic residues" evidence="2">
    <location>
        <begin position="28"/>
        <end position="39"/>
    </location>
</feature>
<feature type="compositionally biased region" description="Low complexity" evidence="2">
    <location>
        <begin position="40"/>
        <end position="49"/>
    </location>
</feature>
<feature type="sequence conflict" description="In Ref. 3; ABO38770." evidence="5" ref="3">
    <original>T</original>
    <variation>N</variation>
    <location>
        <position position="260"/>
    </location>
</feature>
<gene>
    <name evidence="4" type="primary">NDC80</name>
    <name evidence="7" type="ordered locus">At3g54630</name>
    <name evidence="8" type="ORF">T14E10_200</name>
</gene>
<dbReference type="EMBL" id="AL138656">
    <property type="protein sequence ID" value="CAB77583.1"/>
    <property type="molecule type" value="Genomic_DNA"/>
</dbReference>
<dbReference type="EMBL" id="CP002686">
    <property type="protein sequence ID" value="AEE79259.1"/>
    <property type="molecule type" value="Genomic_DNA"/>
</dbReference>
<dbReference type="EMBL" id="BT030357">
    <property type="protein sequence ID" value="ABO38770.1"/>
    <property type="molecule type" value="mRNA"/>
</dbReference>
<dbReference type="PIR" id="T47622">
    <property type="entry name" value="T47622"/>
</dbReference>
<dbReference type="RefSeq" id="NP_191024.1">
    <property type="nucleotide sequence ID" value="NM_115320.2"/>
</dbReference>
<dbReference type="SMR" id="Q9M1G5"/>
<dbReference type="FunCoup" id="Q9M1G5">
    <property type="interactions" value="1678"/>
</dbReference>
<dbReference type="STRING" id="3702.Q9M1G5"/>
<dbReference type="iPTMnet" id="Q9M1G5"/>
<dbReference type="PaxDb" id="3702-AT3G54630.1"/>
<dbReference type="ProteomicsDB" id="251125"/>
<dbReference type="EnsemblPlants" id="AT3G54630.1">
    <property type="protein sequence ID" value="AT3G54630.1"/>
    <property type="gene ID" value="AT3G54630"/>
</dbReference>
<dbReference type="GeneID" id="824628"/>
<dbReference type="Gramene" id="AT3G54630.1">
    <property type="protein sequence ID" value="AT3G54630.1"/>
    <property type="gene ID" value="AT3G54630"/>
</dbReference>
<dbReference type="KEGG" id="ath:AT3G54630"/>
<dbReference type="Araport" id="AT3G54630"/>
<dbReference type="TAIR" id="AT3G54630">
    <property type="gene designation" value="NDC80"/>
</dbReference>
<dbReference type="eggNOG" id="KOG0995">
    <property type="taxonomic scope" value="Eukaryota"/>
</dbReference>
<dbReference type="HOGENOM" id="CLU_019866_0_0_1"/>
<dbReference type="InParanoid" id="Q9M1G5"/>
<dbReference type="OMA" id="PSHKFQK"/>
<dbReference type="OrthoDB" id="7459479at2759"/>
<dbReference type="PhylomeDB" id="Q9M1G5"/>
<dbReference type="PRO" id="PR:Q9M1G5"/>
<dbReference type="Proteomes" id="UP000006548">
    <property type="component" value="Chromosome 3"/>
</dbReference>
<dbReference type="ExpressionAtlas" id="Q9M1G5">
    <property type="expression patterns" value="baseline and differential"/>
</dbReference>
<dbReference type="GO" id="GO:0031262">
    <property type="term" value="C:Ndc80 complex"/>
    <property type="evidence" value="ECO:0000250"/>
    <property type="project" value="UniProtKB"/>
</dbReference>
<dbReference type="GO" id="GO:0008017">
    <property type="term" value="F:microtubule binding"/>
    <property type="evidence" value="ECO:0000250"/>
    <property type="project" value="UniProtKB"/>
</dbReference>
<dbReference type="GO" id="GO:0051301">
    <property type="term" value="P:cell division"/>
    <property type="evidence" value="ECO:0007669"/>
    <property type="project" value="UniProtKB-KW"/>
</dbReference>
<dbReference type="Gene3D" id="1.10.418.30">
    <property type="entry name" value="Ncd80 complex, Ncd80 subunit"/>
    <property type="match status" value="1"/>
</dbReference>
<dbReference type="InterPro" id="IPR055260">
    <property type="entry name" value="Ndc80_CH"/>
</dbReference>
<dbReference type="InterPro" id="IPR055307">
    <property type="entry name" value="NDC80_plants"/>
</dbReference>
<dbReference type="InterPro" id="IPR038273">
    <property type="entry name" value="Ndc80_sf"/>
</dbReference>
<dbReference type="PANTHER" id="PTHR46681">
    <property type="entry name" value="KINETOCHORE PROTEIN NDC80 HOMOLOG"/>
    <property type="match status" value="1"/>
</dbReference>
<dbReference type="PANTHER" id="PTHR46681:SF1">
    <property type="entry name" value="KINETOCHORE PROTEIN NDC80 HOMOLOG"/>
    <property type="match status" value="1"/>
</dbReference>
<dbReference type="Pfam" id="PF03801">
    <property type="entry name" value="Ndc80_HEC"/>
    <property type="match status" value="1"/>
</dbReference>
<comment type="function">
    <text evidence="6">Acts as a component of the essential kinetochore-associated NDC80 complex, which is required for chromosome segregation and spindle checkpoint activity to ensure proper cell division.</text>
</comment>
<comment type="subunit">
    <text evidence="3">Component of the NDC80 complex, which consists of NDC80, NUF2, SPC24 and SPC25.</text>
</comment>
<comment type="subcellular location">
    <subcellularLocation>
        <location evidence="3">Chromosome</location>
        <location evidence="3">Centromere</location>
    </subcellularLocation>
</comment>
<comment type="similarity">
    <text evidence="5">Belongs to the NDC80/HEC1 family.</text>
</comment>